<reference key="1">
    <citation type="journal article" date="2008" name="J. Bacteriol.">
        <title>The genome sequence of the tomato-pathogenic actinomycete Clavibacter michiganensis subsp. michiganensis NCPPB382 reveals a large island involved in pathogenicity.</title>
        <authorList>
            <person name="Gartemann K.-H."/>
            <person name="Abt B."/>
            <person name="Bekel T."/>
            <person name="Burger A."/>
            <person name="Engemann J."/>
            <person name="Fluegel M."/>
            <person name="Gaigalat L."/>
            <person name="Goesmann A."/>
            <person name="Graefen I."/>
            <person name="Kalinowski J."/>
            <person name="Kaup O."/>
            <person name="Kirchner O."/>
            <person name="Krause L."/>
            <person name="Linke B."/>
            <person name="McHardy A."/>
            <person name="Meyer F."/>
            <person name="Pohle S."/>
            <person name="Rueckert C."/>
            <person name="Schneiker S."/>
            <person name="Zellermann E.-M."/>
            <person name="Puehler A."/>
            <person name="Eichenlaub R."/>
            <person name="Kaiser O."/>
            <person name="Bartels D."/>
        </authorList>
    </citation>
    <scope>NUCLEOTIDE SEQUENCE [LARGE SCALE GENOMIC DNA]</scope>
    <source>
        <strain>NCPPB 382</strain>
    </source>
</reference>
<evidence type="ECO:0000255" key="1">
    <source>
        <dbReference type="HAMAP-Rule" id="MF_00038"/>
    </source>
</evidence>
<gene>
    <name evidence="1" type="primary">mraY</name>
    <name type="ordered locus">CMM_1862</name>
</gene>
<protein>
    <recommendedName>
        <fullName evidence="1">Phospho-N-acetylmuramoyl-pentapeptide-transferase</fullName>
        <ecNumber evidence="1">2.7.8.13</ecNumber>
    </recommendedName>
    <alternativeName>
        <fullName evidence="1">UDP-MurNAc-pentapeptide phosphotransferase</fullName>
    </alternativeName>
</protein>
<name>MRAY_CLAM3</name>
<proteinExistence type="inferred from homology"/>
<sequence>MVALLFAGAFSLAFTLFLTPLFIKLFHRLQWGQFIRDDGPQTHHTKRGTATMGGIVIILASVLGYFVGHLLTWDGIRFDPVTPSGLLVVFMMVGLGFVGFLDDYLKTRKQQSLGLGGWQKIAGQVVVATVFAVLAITLRDPVSGLTPASTAISLFRDLPLDFMALGAVIGTGLFIVWICLIVASASNGVNVADGLDGLAAGASIFSIGSYVIIGFWQFNQSCDSVSSYQNEYRCYEVASPLDLAIIAASIVGALIGFLWWNTSPAQIFMGDTGSLGLGGALAALAILSRTELLLVFIGGLFVIVAGSVVLQRIYFKLTHGKRIFLMSPLHHHFELKGWAEVTVVVRFWIIAGLLVAAGVGTFYLEWITQ</sequence>
<keyword id="KW-0131">Cell cycle</keyword>
<keyword id="KW-0132">Cell division</keyword>
<keyword id="KW-1003">Cell membrane</keyword>
<keyword id="KW-0133">Cell shape</keyword>
<keyword id="KW-0961">Cell wall biogenesis/degradation</keyword>
<keyword id="KW-0460">Magnesium</keyword>
<keyword id="KW-0472">Membrane</keyword>
<keyword id="KW-0479">Metal-binding</keyword>
<keyword id="KW-0573">Peptidoglycan synthesis</keyword>
<keyword id="KW-0808">Transferase</keyword>
<keyword id="KW-0812">Transmembrane</keyword>
<keyword id="KW-1133">Transmembrane helix</keyword>
<accession>A5CS54</accession>
<organism>
    <name type="scientific">Clavibacter michiganensis subsp. michiganensis (strain NCPPB 382)</name>
    <dbReference type="NCBI Taxonomy" id="443906"/>
    <lineage>
        <taxon>Bacteria</taxon>
        <taxon>Bacillati</taxon>
        <taxon>Actinomycetota</taxon>
        <taxon>Actinomycetes</taxon>
        <taxon>Micrococcales</taxon>
        <taxon>Microbacteriaceae</taxon>
        <taxon>Clavibacter</taxon>
    </lineage>
</organism>
<dbReference type="EC" id="2.7.8.13" evidence="1"/>
<dbReference type="EMBL" id="AM711867">
    <property type="protein sequence ID" value="CAN01918.1"/>
    <property type="molecule type" value="Genomic_DNA"/>
</dbReference>
<dbReference type="RefSeq" id="WP_012038549.1">
    <property type="nucleotide sequence ID" value="NC_009480.1"/>
</dbReference>
<dbReference type="SMR" id="A5CS54"/>
<dbReference type="GeneID" id="92947854"/>
<dbReference type="KEGG" id="cmi:CMM_1862"/>
<dbReference type="eggNOG" id="COG0472">
    <property type="taxonomic scope" value="Bacteria"/>
</dbReference>
<dbReference type="HOGENOM" id="CLU_023982_0_1_11"/>
<dbReference type="OrthoDB" id="9805475at2"/>
<dbReference type="UniPathway" id="UPA00219"/>
<dbReference type="Proteomes" id="UP000001564">
    <property type="component" value="Chromosome"/>
</dbReference>
<dbReference type="GO" id="GO:0005886">
    <property type="term" value="C:plasma membrane"/>
    <property type="evidence" value="ECO:0007669"/>
    <property type="project" value="UniProtKB-SubCell"/>
</dbReference>
<dbReference type="GO" id="GO:0046872">
    <property type="term" value="F:metal ion binding"/>
    <property type="evidence" value="ECO:0007669"/>
    <property type="project" value="UniProtKB-KW"/>
</dbReference>
<dbReference type="GO" id="GO:0008963">
    <property type="term" value="F:phospho-N-acetylmuramoyl-pentapeptide-transferase activity"/>
    <property type="evidence" value="ECO:0007669"/>
    <property type="project" value="UniProtKB-UniRule"/>
</dbReference>
<dbReference type="GO" id="GO:0051992">
    <property type="term" value="F:UDP-N-acetylmuramoyl-L-alanyl-D-glutamyl-meso-2,6-diaminopimelyl-D-alanyl-D-alanine:undecaprenyl-phosphate transferase activity"/>
    <property type="evidence" value="ECO:0007669"/>
    <property type="project" value="RHEA"/>
</dbReference>
<dbReference type="GO" id="GO:0051301">
    <property type="term" value="P:cell division"/>
    <property type="evidence" value="ECO:0007669"/>
    <property type="project" value="UniProtKB-KW"/>
</dbReference>
<dbReference type="GO" id="GO:0071555">
    <property type="term" value="P:cell wall organization"/>
    <property type="evidence" value="ECO:0007669"/>
    <property type="project" value="UniProtKB-KW"/>
</dbReference>
<dbReference type="GO" id="GO:0009252">
    <property type="term" value="P:peptidoglycan biosynthetic process"/>
    <property type="evidence" value="ECO:0007669"/>
    <property type="project" value="UniProtKB-UniRule"/>
</dbReference>
<dbReference type="GO" id="GO:0008360">
    <property type="term" value="P:regulation of cell shape"/>
    <property type="evidence" value="ECO:0007669"/>
    <property type="project" value="UniProtKB-KW"/>
</dbReference>
<dbReference type="CDD" id="cd06852">
    <property type="entry name" value="GT_MraY"/>
    <property type="match status" value="1"/>
</dbReference>
<dbReference type="HAMAP" id="MF_00038">
    <property type="entry name" value="MraY"/>
    <property type="match status" value="1"/>
</dbReference>
<dbReference type="InterPro" id="IPR000715">
    <property type="entry name" value="Glycosyl_transferase_4"/>
</dbReference>
<dbReference type="InterPro" id="IPR003524">
    <property type="entry name" value="PNAcMuramoyl-5peptid_Trfase"/>
</dbReference>
<dbReference type="InterPro" id="IPR018480">
    <property type="entry name" value="PNAcMuramoyl-5peptid_Trfase_CS"/>
</dbReference>
<dbReference type="NCBIfam" id="TIGR00445">
    <property type="entry name" value="mraY"/>
    <property type="match status" value="1"/>
</dbReference>
<dbReference type="PANTHER" id="PTHR22926">
    <property type="entry name" value="PHOSPHO-N-ACETYLMURAMOYL-PENTAPEPTIDE-TRANSFERASE"/>
    <property type="match status" value="1"/>
</dbReference>
<dbReference type="PANTHER" id="PTHR22926:SF5">
    <property type="entry name" value="PHOSPHO-N-ACETYLMURAMOYL-PENTAPEPTIDE-TRANSFERASE HOMOLOG"/>
    <property type="match status" value="1"/>
</dbReference>
<dbReference type="Pfam" id="PF00953">
    <property type="entry name" value="Glycos_transf_4"/>
    <property type="match status" value="1"/>
</dbReference>
<dbReference type="PROSITE" id="PS01348">
    <property type="entry name" value="MRAY_2"/>
    <property type="match status" value="1"/>
</dbReference>
<comment type="function">
    <text evidence="1">Catalyzes the initial step of the lipid cycle reactions in the biosynthesis of the cell wall peptidoglycan: transfers peptidoglycan precursor phospho-MurNAc-pentapeptide from UDP-MurNAc-pentapeptide onto the lipid carrier undecaprenyl phosphate, yielding undecaprenyl-pyrophosphoryl-MurNAc-pentapeptide, known as lipid I.</text>
</comment>
<comment type="catalytic activity">
    <reaction evidence="1">
        <text>UDP-N-acetyl-alpha-D-muramoyl-L-alanyl-gamma-D-glutamyl-meso-2,6-diaminopimeloyl-D-alanyl-D-alanine + di-trans,octa-cis-undecaprenyl phosphate = di-trans,octa-cis-undecaprenyl diphospho-N-acetyl-alpha-D-muramoyl-L-alanyl-D-glutamyl-meso-2,6-diaminopimeloyl-D-alanyl-D-alanine + UMP</text>
        <dbReference type="Rhea" id="RHEA:28386"/>
        <dbReference type="ChEBI" id="CHEBI:57865"/>
        <dbReference type="ChEBI" id="CHEBI:60392"/>
        <dbReference type="ChEBI" id="CHEBI:61386"/>
        <dbReference type="ChEBI" id="CHEBI:61387"/>
        <dbReference type="EC" id="2.7.8.13"/>
    </reaction>
</comment>
<comment type="cofactor">
    <cofactor evidence="1">
        <name>Mg(2+)</name>
        <dbReference type="ChEBI" id="CHEBI:18420"/>
    </cofactor>
</comment>
<comment type="pathway">
    <text evidence="1">Cell wall biogenesis; peptidoglycan biosynthesis.</text>
</comment>
<comment type="subcellular location">
    <subcellularLocation>
        <location evidence="1">Cell membrane</location>
        <topology evidence="1">Multi-pass membrane protein</topology>
    </subcellularLocation>
</comment>
<comment type="similarity">
    <text evidence="1">Belongs to the glycosyltransferase 4 family. MraY subfamily.</text>
</comment>
<feature type="chain" id="PRO_1000002962" description="Phospho-N-acetylmuramoyl-pentapeptide-transferase">
    <location>
        <begin position="1"/>
        <end position="369"/>
    </location>
</feature>
<feature type="transmembrane region" description="Helical" evidence="1">
    <location>
        <begin position="3"/>
        <end position="23"/>
    </location>
</feature>
<feature type="transmembrane region" description="Helical" evidence="1">
    <location>
        <begin position="53"/>
        <end position="73"/>
    </location>
</feature>
<feature type="transmembrane region" description="Helical" evidence="1">
    <location>
        <begin position="81"/>
        <end position="101"/>
    </location>
</feature>
<feature type="transmembrane region" description="Helical" evidence="1">
    <location>
        <begin position="118"/>
        <end position="138"/>
    </location>
</feature>
<feature type="transmembrane region" description="Helical" evidence="1">
    <location>
        <begin position="162"/>
        <end position="182"/>
    </location>
</feature>
<feature type="transmembrane region" description="Helical" evidence="1">
    <location>
        <begin position="198"/>
        <end position="218"/>
    </location>
</feature>
<feature type="transmembrane region" description="Helical" evidence="1">
    <location>
        <begin position="240"/>
        <end position="260"/>
    </location>
</feature>
<feature type="transmembrane region" description="Helical" evidence="1">
    <location>
        <begin position="267"/>
        <end position="287"/>
    </location>
</feature>
<feature type="transmembrane region" description="Helical" evidence="1">
    <location>
        <begin position="290"/>
        <end position="310"/>
    </location>
</feature>
<feature type="transmembrane region" description="Helical" evidence="1">
    <location>
        <begin position="347"/>
        <end position="367"/>
    </location>
</feature>